<reference key="1">
    <citation type="submission" date="2008-01" db="EMBL/GenBank/DDBJ databases">
        <title>Complete sequence of Thermoanaerobacter pseudethanolicus 39E.</title>
        <authorList>
            <person name="Copeland A."/>
            <person name="Lucas S."/>
            <person name="Lapidus A."/>
            <person name="Barry K."/>
            <person name="Glavina del Rio T."/>
            <person name="Dalin E."/>
            <person name="Tice H."/>
            <person name="Pitluck S."/>
            <person name="Bruce D."/>
            <person name="Goodwin L."/>
            <person name="Saunders E."/>
            <person name="Brettin T."/>
            <person name="Detter J.C."/>
            <person name="Han C."/>
            <person name="Schmutz J."/>
            <person name="Larimer F."/>
            <person name="Land M."/>
            <person name="Hauser L."/>
            <person name="Kyrpides N."/>
            <person name="Lykidis A."/>
            <person name="Hemme C."/>
            <person name="Fields M.W."/>
            <person name="He Z."/>
            <person name="Zhou J."/>
            <person name="Richardson P."/>
        </authorList>
    </citation>
    <scope>NUCLEOTIDE SEQUENCE [LARGE SCALE GENOMIC DNA]</scope>
    <source>
        <strain>ATCC 33223 / DSM 2355 / 39E</strain>
    </source>
</reference>
<accession>B0KCJ0</accession>
<comment type="function">
    <text evidence="1">Forms part of the ribosomal stalk, playing a central role in the interaction of the ribosome with GTP-bound translation factors.</text>
</comment>
<comment type="subunit">
    <text evidence="1">Part of the ribosomal stalk of the 50S ribosomal subunit. The N-terminus interacts with L11 and the large rRNA to form the base of the stalk. The C-terminus forms an elongated spine to which L12 dimers bind in a sequential fashion forming a multimeric L10(L12)X complex.</text>
</comment>
<comment type="similarity">
    <text evidence="1">Belongs to the universal ribosomal protein uL10 family.</text>
</comment>
<organism>
    <name type="scientific">Thermoanaerobacter pseudethanolicus (strain ATCC 33223 / 39E)</name>
    <name type="common">Clostridium thermohydrosulfuricum</name>
    <dbReference type="NCBI Taxonomy" id="340099"/>
    <lineage>
        <taxon>Bacteria</taxon>
        <taxon>Bacillati</taxon>
        <taxon>Bacillota</taxon>
        <taxon>Clostridia</taxon>
        <taxon>Thermoanaerobacterales</taxon>
        <taxon>Thermoanaerobacteraceae</taxon>
        <taxon>Thermoanaerobacter</taxon>
    </lineage>
</organism>
<sequence length="177" mass="19535">MGTAKEKKQQIVAEFKDKLSQAQTVIFSNFSGLTVEDDTILRRKFREANSEYKVYKNTLMTIAAKELGYGDDLIKYFEGPTSVAFGYDDPVAPAKVLVEFMKDHKGIELKAGLVNGKLVTVEEIKALAELPSREELVAKALGSMKAPITNLVFVLSGTLRSLLYALNAVKEKKQAEA</sequence>
<keyword id="KW-1185">Reference proteome</keyword>
<keyword id="KW-0687">Ribonucleoprotein</keyword>
<keyword id="KW-0689">Ribosomal protein</keyword>
<keyword id="KW-0694">RNA-binding</keyword>
<keyword id="KW-0699">rRNA-binding</keyword>
<name>RL10_THEP3</name>
<evidence type="ECO:0000255" key="1">
    <source>
        <dbReference type="HAMAP-Rule" id="MF_00362"/>
    </source>
</evidence>
<evidence type="ECO:0000305" key="2"/>
<dbReference type="EMBL" id="CP000924">
    <property type="protein sequence ID" value="ABY94033.1"/>
    <property type="molecule type" value="Genomic_DNA"/>
</dbReference>
<dbReference type="RefSeq" id="WP_004402359.1">
    <property type="nucleotide sequence ID" value="NC_010321.1"/>
</dbReference>
<dbReference type="SMR" id="B0KCJ0"/>
<dbReference type="STRING" id="340099.Teth39_0364"/>
<dbReference type="KEGG" id="tpd:Teth39_0364"/>
<dbReference type="eggNOG" id="COG0244">
    <property type="taxonomic scope" value="Bacteria"/>
</dbReference>
<dbReference type="HOGENOM" id="CLU_092227_2_1_9"/>
<dbReference type="Proteomes" id="UP000002156">
    <property type="component" value="Chromosome"/>
</dbReference>
<dbReference type="GO" id="GO:0015934">
    <property type="term" value="C:large ribosomal subunit"/>
    <property type="evidence" value="ECO:0007669"/>
    <property type="project" value="InterPro"/>
</dbReference>
<dbReference type="GO" id="GO:0070180">
    <property type="term" value="F:large ribosomal subunit rRNA binding"/>
    <property type="evidence" value="ECO:0007669"/>
    <property type="project" value="UniProtKB-UniRule"/>
</dbReference>
<dbReference type="GO" id="GO:0003735">
    <property type="term" value="F:structural constituent of ribosome"/>
    <property type="evidence" value="ECO:0007669"/>
    <property type="project" value="InterPro"/>
</dbReference>
<dbReference type="GO" id="GO:0006412">
    <property type="term" value="P:translation"/>
    <property type="evidence" value="ECO:0007669"/>
    <property type="project" value="UniProtKB-UniRule"/>
</dbReference>
<dbReference type="CDD" id="cd05797">
    <property type="entry name" value="Ribosomal_L10"/>
    <property type="match status" value="1"/>
</dbReference>
<dbReference type="Gene3D" id="3.30.70.1730">
    <property type="match status" value="1"/>
</dbReference>
<dbReference type="Gene3D" id="6.10.250.290">
    <property type="match status" value="1"/>
</dbReference>
<dbReference type="HAMAP" id="MF_00362">
    <property type="entry name" value="Ribosomal_uL10"/>
    <property type="match status" value="1"/>
</dbReference>
<dbReference type="InterPro" id="IPR001790">
    <property type="entry name" value="Ribosomal_uL10"/>
</dbReference>
<dbReference type="InterPro" id="IPR043141">
    <property type="entry name" value="Ribosomal_uL10-like_sf"/>
</dbReference>
<dbReference type="InterPro" id="IPR022973">
    <property type="entry name" value="Ribosomal_uL10_bac"/>
</dbReference>
<dbReference type="InterPro" id="IPR047865">
    <property type="entry name" value="Ribosomal_uL10_bac_type"/>
</dbReference>
<dbReference type="InterPro" id="IPR002363">
    <property type="entry name" value="Ribosomal_uL10_CS_bac"/>
</dbReference>
<dbReference type="NCBIfam" id="NF000955">
    <property type="entry name" value="PRK00099.1-1"/>
    <property type="match status" value="1"/>
</dbReference>
<dbReference type="PANTHER" id="PTHR11560">
    <property type="entry name" value="39S RIBOSOMAL PROTEIN L10, MITOCHONDRIAL"/>
    <property type="match status" value="1"/>
</dbReference>
<dbReference type="Pfam" id="PF00466">
    <property type="entry name" value="Ribosomal_L10"/>
    <property type="match status" value="1"/>
</dbReference>
<dbReference type="SUPFAM" id="SSF160369">
    <property type="entry name" value="Ribosomal protein L10-like"/>
    <property type="match status" value="1"/>
</dbReference>
<dbReference type="PROSITE" id="PS01109">
    <property type="entry name" value="RIBOSOMAL_L10"/>
    <property type="match status" value="1"/>
</dbReference>
<protein>
    <recommendedName>
        <fullName evidence="1">Large ribosomal subunit protein uL10</fullName>
    </recommendedName>
    <alternativeName>
        <fullName evidence="2">50S ribosomal protein L10</fullName>
    </alternativeName>
</protein>
<proteinExistence type="inferred from homology"/>
<feature type="chain" id="PRO_1000121026" description="Large ribosomal subunit protein uL10">
    <location>
        <begin position="1"/>
        <end position="177"/>
    </location>
</feature>
<gene>
    <name evidence="1" type="primary">rplJ</name>
    <name type="ordered locus">Teth39_0364</name>
</gene>